<organism>
    <name type="scientific">Streptomyces sp. (strain CB03234)</name>
    <dbReference type="NCBI Taxonomy" id="1703937"/>
    <lineage>
        <taxon>Bacteria</taxon>
        <taxon>Bacillati</taxon>
        <taxon>Actinomycetota</taxon>
        <taxon>Actinomycetes</taxon>
        <taxon>Kitasatosporales</taxon>
        <taxon>Streptomycetaceae</taxon>
        <taxon>Streptomyces</taxon>
    </lineage>
</organism>
<feature type="chain" id="PRO_0000458451" description="Gas vesicle protein J">
    <location>
        <begin position="1"/>
        <end position="106"/>
    </location>
</feature>
<name>GVPJ_STRX0</name>
<evidence type="ECO:0000250" key="1">
    <source>
        <dbReference type="UniProtKB" id="P24374"/>
    </source>
</evidence>
<evidence type="ECO:0000269" key="2">
    <source>
    </source>
</evidence>
<evidence type="ECO:0000303" key="3">
    <source>
    </source>
</evidence>
<evidence type="ECO:0000305" key="4"/>
<evidence type="ECO:0000305" key="5">
    <source>
    </source>
</evidence>
<evidence type="ECO:0000312" key="6">
    <source>
        <dbReference type="EMBL" id="OKK04375.1"/>
    </source>
</evidence>
<dbReference type="EMBL" id="LIYH01000003">
    <property type="protein sequence ID" value="OKK04375.1"/>
    <property type="molecule type" value="Genomic_DNA"/>
</dbReference>
<dbReference type="RefSeq" id="WP_073754888.1">
    <property type="nucleotide sequence ID" value="NZ_LIYH01000003.1"/>
</dbReference>
<dbReference type="SMR" id="A0A1Q5LRA3"/>
<dbReference type="STRING" id="1703937.AMK26_13460"/>
<dbReference type="OrthoDB" id="532318at2"/>
<dbReference type="Proteomes" id="UP000186270">
    <property type="component" value="Unassembled WGS sequence"/>
</dbReference>
<dbReference type="GO" id="GO:0031411">
    <property type="term" value="C:gas vesicle"/>
    <property type="evidence" value="ECO:0007669"/>
    <property type="project" value="UniProtKB-SubCell"/>
</dbReference>
<dbReference type="GO" id="GO:0012506">
    <property type="term" value="C:vesicle membrane"/>
    <property type="evidence" value="ECO:0007669"/>
    <property type="project" value="InterPro"/>
</dbReference>
<dbReference type="GO" id="GO:0005198">
    <property type="term" value="F:structural molecule activity"/>
    <property type="evidence" value="ECO:0007669"/>
    <property type="project" value="InterPro"/>
</dbReference>
<dbReference type="InterPro" id="IPR000638">
    <property type="entry name" value="Gas-vesicle_GvpA-like"/>
</dbReference>
<dbReference type="InterPro" id="IPR050530">
    <property type="entry name" value="GvpA"/>
</dbReference>
<dbReference type="InterPro" id="IPR018493">
    <property type="entry name" value="GvpA-like_CS"/>
</dbReference>
<dbReference type="PANTHER" id="PTHR35344:SF4">
    <property type="entry name" value="GAS VESICLE PROTEIN A1"/>
    <property type="match status" value="1"/>
</dbReference>
<dbReference type="PANTHER" id="PTHR35344">
    <property type="entry name" value="GAS VESICLE STRUCTURAL PROTEIN 2-RELATED"/>
    <property type="match status" value="1"/>
</dbReference>
<dbReference type="Pfam" id="PF00741">
    <property type="entry name" value="Gas_vesicle"/>
    <property type="match status" value="1"/>
</dbReference>
<dbReference type="PROSITE" id="PS00234">
    <property type="entry name" value="GAS_VESICLE_A_1"/>
    <property type="match status" value="1"/>
</dbReference>
<keyword id="KW-0304">Gas vesicle</keyword>
<keyword id="KW-1185">Reference proteome</keyword>
<reference evidence="6" key="1">
    <citation type="journal article" date="2016" name="MBio">
        <title>Strain Prioritization and Genome Mining for Enediyne Natural Products.</title>
        <authorList>
            <person name="Yan X."/>
            <person name="Ge H."/>
            <person name="Huang T."/>
            <person name="Hindra X."/>
            <person name="Yang D."/>
            <person name="Teng Q."/>
            <person name="Crnovcic I."/>
            <person name="Li X."/>
            <person name="Rudolf J.D."/>
            <person name="Lohman J.R."/>
            <person name="Gansemans Y."/>
            <person name="Zhu X."/>
            <person name="Huang Y."/>
            <person name="Zhao L.X."/>
            <person name="Jiang Y."/>
            <person name="Van Nieuwerburgh F."/>
            <person name="Rader C."/>
            <person name="Duan Y."/>
            <person name="Shen B."/>
        </authorList>
    </citation>
    <scope>NUCLEOTIDE SEQUENCE [LARGE SCALE GENOMIC DNA]</scope>
    <source>
        <strain>CB03234</strain>
    </source>
</reference>
<reference key="2">
    <citation type="journal article" date="2019" name="Appl. Microbiol. Biotechnol.">
        <title>Discovery of gas vesicles in Streptomyces sp. CB03234-S and potential effects of gas vesicle gene overexpression on morphological and metabolic changes in streptomycetes.</title>
        <authorList>
            <person name="Huang R."/>
            <person name="Lin J."/>
            <person name="Gao D."/>
            <person name="Zhang F."/>
            <person name="Yi L."/>
            <person name="Huang Y."/>
            <person name="Yan X."/>
            <person name="Duan Y."/>
            <person name="Zhu X."/>
        </authorList>
    </citation>
    <scope>INDUCTION</scope>
    <scope>PROBABLE GAS VESICLE FORMATION</scope>
    <source>
        <strain>CB03234</strain>
    </source>
</reference>
<proteinExistence type="evidence at transcript level"/>
<sequence length="106" mass="11555">MTTPRPSGLPSPYASDGSSANLADILERVLDKGVVIAGDIKINLLDIELLTIKLRLVVASVDRAKEMGIDWWESDPALSSRARGSELARENADLQRRIAELEGRTV</sequence>
<accession>A0A1Q5LRA3</accession>
<protein>
    <recommendedName>
        <fullName evidence="3">Gas vesicle protein J</fullName>
    </recommendedName>
</protein>
<gene>
    <name evidence="3" type="primary">gvpJ</name>
    <name evidence="6" type="ORF">AMK26_13460</name>
</gene>
<comment type="function">
    <text evidence="1 4">A minor component of the gas vesicle, might be involved in nucleating gas vesicle formation (By similarity). Gas vesicles are hollow, gas filled proteinaceous nanostructures found in some microorganisms. It is not clear what function gas vesicles perform in soil bacteria (Probable).</text>
</comment>
<comment type="subcellular location">
    <subcellularLocation>
        <location evidence="1 5">Gas vesicle</location>
    </subcellularLocation>
</comment>
<comment type="induction">
    <text evidence="2">Gas vesicle production is induced by growth conditions that promote production of secondary metabolites tiancimycin A and B.</text>
</comment>
<comment type="miscellaneous">
    <text evidence="2">This strain probably produces some gas vesicles from the probable gvpO-gvpA-gvpF-gvpG-gvpJ-gvpL-gvpS-gvpK operon; it can be induced to produce more under certain growth conditions.</text>
</comment>
<comment type="similarity">
    <text evidence="4">Belongs to the gas vesicle GvpA family.</text>
</comment>